<organism>
    <name type="scientific">Escherichia coli O127:H6 (strain E2348/69 / EPEC)</name>
    <dbReference type="NCBI Taxonomy" id="574521"/>
    <lineage>
        <taxon>Bacteria</taxon>
        <taxon>Pseudomonadati</taxon>
        <taxon>Pseudomonadota</taxon>
        <taxon>Gammaproteobacteria</taxon>
        <taxon>Enterobacterales</taxon>
        <taxon>Enterobacteriaceae</taxon>
        <taxon>Escherichia</taxon>
    </lineage>
</organism>
<gene>
    <name evidence="1" type="primary">mdtG</name>
    <name type="ordered locus">E2348C_1143</name>
</gene>
<feature type="chain" id="PRO_1000185159" description="Multidrug resistance protein MdtG">
    <location>
        <begin position="1"/>
        <end position="408"/>
    </location>
</feature>
<feature type="transmembrane region" description="Helical" evidence="1">
    <location>
        <begin position="16"/>
        <end position="36"/>
    </location>
</feature>
<feature type="transmembrane region" description="Helical" evidence="1">
    <location>
        <begin position="58"/>
        <end position="78"/>
    </location>
</feature>
<feature type="transmembrane region" description="Helical" evidence="1">
    <location>
        <begin position="92"/>
        <end position="112"/>
    </location>
</feature>
<feature type="transmembrane region" description="Helical" evidence="1">
    <location>
        <begin position="115"/>
        <end position="135"/>
    </location>
</feature>
<feature type="transmembrane region" description="Helical" evidence="1">
    <location>
        <begin position="146"/>
        <end position="166"/>
    </location>
</feature>
<feature type="transmembrane region" description="Helical" evidence="1">
    <location>
        <begin position="173"/>
        <end position="193"/>
    </location>
</feature>
<feature type="transmembrane region" description="Helical" evidence="1">
    <location>
        <begin position="224"/>
        <end position="244"/>
    </location>
</feature>
<feature type="transmembrane region" description="Helical" evidence="1">
    <location>
        <begin position="256"/>
        <end position="276"/>
    </location>
</feature>
<feature type="transmembrane region" description="Helical" evidence="1">
    <location>
        <begin position="290"/>
        <end position="310"/>
    </location>
</feature>
<feature type="transmembrane region" description="Helical" evidence="1">
    <location>
        <begin position="319"/>
        <end position="339"/>
    </location>
</feature>
<feature type="transmembrane region" description="Helical" evidence="1">
    <location>
        <begin position="378"/>
        <end position="398"/>
    </location>
</feature>
<comment type="function">
    <text evidence="1">Confers resistance to fosfomycin and deoxycholate.</text>
</comment>
<comment type="subcellular location">
    <subcellularLocation>
        <location evidence="1">Cell inner membrane</location>
        <topology evidence="1">Multi-pass membrane protein</topology>
    </subcellularLocation>
</comment>
<comment type="similarity">
    <text evidence="1">Belongs to the major facilitator superfamily. DHA1 family. MdtG (TC 2.A.1.2.20) subfamily.</text>
</comment>
<keyword id="KW-0046">Antibiotic resistance</keyword>
<keyword id="KW-0997">Cell inner membrane</keyword>
<keyword id="KW-1003">Cell membrane</keyword>
<keyword id="KW-0472">Membrane</keyword>
<keyword id="KW-1185">Reference proteome</keyword>
<keyword id="KW-0812">Transmembrane</keyword>
<keyword id="KW-1133">Transmembrane helix</keyword>
<keyword id="KW-0813">Transport</keyword>
<reference key="1">
    <citation type="journal article" date="2009" name="J. Bacteriol.">
        <title>Complete genome sequence and comparative genome analysis of enteropathogenic Escherichia coli O127:H6 strain E2348/69.</title>
        <authorList>
            <person name="Iguchi A."/>
            <person name="Thomson N.R."/>
            <person name="Ogura Y."/>
            <person name="Saunders D."/>
            <person name="Ooka T."/>
            <person name="Henderson I.R."/>
            <person name="Harris D."/>
            <person name="Asadulghani M."/>
            <person name="Kurokawa K."/>
            <person name="Dean P."/>
            <person name="Kenny B."/>
            <person name="Quail M.A."/>
            <person name="Thurston S."/>
            <person name="Dougan G."/>
            <person name="Hayashi T."/>
            <person name="Parkhill J."/>
            <person name="Frankel G."/>
        </authorList>
    </citation>
    <scope>NUCLEOTIDE SEQUENCE [LARGE SCALE GENOMIC DNA]</scope>
    <source>
        <strain>E2348/69 / EPEC</strain>
    </source>
</reference>
<dbReference type="EMBL" id="FM180568">
    <property type="protein sequence ID" value="CAS08691.1"/>
    <property type="molecule type" value="Genomic_DNA"/>
</dbReference>
<dbReference type="RefSeq" id="WP_000074171.1">
    <property type="nucleotide sequence ID" value="NC_011601.1"/>
</dbReference>
<dbReference type="SMR" id="B7UP67"/>
<dbReference type="KEGG" id="ecg:E2348C_1143"/>
<dbReference type="HOGENOM" id="CLU_001265_57_3_6"/>
<dbReference type="Proteomes" id="UP000008205">
    <property type="component" value="Chromosome"/>
</dbReference>
<dbReference type="GO" id="GO:0005886">
    <property type="term" value="C:plasma membrane"/>
    <property type="evidence" value="ECO:0007669"/>
    <property type="project" value="UniProtKB-SubCell"/>
</dbReference>
<dbReference type="GO" id="GO:0022857">
    <property type="term" value="F:transmembrane transporter activity"/>
    <property type="evidence" value="ECO:0007669"/>
    <property type="project" value="UniProtKB-UniRule"/>
</dbReference>
<dbReference type="GO" id="GO:0046677">
    <property type="term" value="P:response to antibiotic"/>
    <property type="evidence" value="ECO:0007669"/>
    <property type="project" value="UniProtKB-KW"/>
</dbReference>
<dbReference type="CDD" id="cd17391">
    <property type="entry name" value="MFS_MdtG_MDR_like"/>
    <property type="match status" value="1"/>
</dbReference>
<dbReference type="FunFam" id="1.20.1250.20:FF:000020">
    <property type="entry name" value="Multidrug resistance protein MdtG"/>
    <property type="match status" value="1"/>
</dbReference>
<dbReference type="FunFam" id="1.20.1250.20:FF:000022">
    <property type="entry name" value="Multidrug resistance protein MdtG"/>
    <property type="match status" value="1"/>
</dbReference>
<dbReference type="Gene3D" id="1.20.1250.20">
    <property type="entry name" value="MFS general substrate transporter like domains"/>
    <property type="match status" value="2"/>
</dbReference>
<dbReference type="HAMAP" id="MF_01528">
    <property type="entry name" value="MFS_MdtG"/>
    <property type="match status" value="1"/>
</dbReference>
<dbReference type="InterPro" id="IPR011701">
    <property type="entry name" value="MFS"/>
</dbReference>
<dbReference type="InterPro" id="IPR020846">
    <property type="entry name" value="MFS_dom"/>
</dbReference>
<dbReference type="InterPro" id="IPR050497">
    <property type="entry name" value="MFS_MdtG_subfamily"/>
</dbReference>
<dbReference type="InterPro" id="IPR036259">
    <property type="entry name" value="MFS_trans_sf"/>
</dbReference>
<dbReference type="InterPro" id="IPR023692">
    <property type="entry name" value="Mutidrug-R_MdtG"/>
</dbReference>
<dbReference type="InterPro" id="IPR001958">
    <property type="entry name" value="Tet-R_TetA/multi-R_MdtG-like"/>
</dbReference>
<dbReference type="NCBIfam" id="NF007372">
    <property type="entry name" value="PRK09874.1"/>
    <property type="match status" value="1"/>
</dbReference>
<dbReference type="PANTHER" id="PTHR43414">
    <property type="entry name" value="MULTIDRUG RESISTANCE PROTEIN MDTG"/>
    <property type="match status" value="1"/>
</dbReference>
<dbReference type="PANTHER" id="PTHR43414:SF6">
    <property type="entry name" value="MULTIDRUG RESISTANCE PROTEIN MDTG"/>
    <property type="match status" value="1"/>
</dbReference>
<dbReference type="Pfam" id="PF07690">
    <property type="entry name" value="MFS_1"/>
    <property type="match status" value="1"/>
</dbReference>
<dbReference type="PRINTS" id="PR01035">
    <property type="entry name" value="TCRTETA"/>
</dbReference>
<dbReference type="SUPFAM" id="SSF103473">
    <property type="entry name" value="MFS general substrate transporter"/>
    <property type="match status" value="1"/>
</dbReference>
<dbReference type="PROSITE" id="PS50850">
    <property type="entry name" value="MFS"/>
    <property type="match status" value="1"/>
</dbReference>
<protein>
    <recommendedName>
        <fullName evidence="1">Multidrug resistance protein MdtG</fullName>
    </recommendedName>
</protein>
<sequence length="408" mass="43881">MSPCENDTPINWKRNLIVAWLGCFLTGAAFSLVMPFLPLYVEQLGVTGHSALNMWSGIVFSITFLFSAIASPFWGGLADRKGRKLMLLRSALGMGIVMVLMGLAQNIWQFLILRALLGLLGGFVPNANALIATQVPRNKSGWALGTLSTGGVSGALLGPMAGGLLADSYGLRPVFFITASVLILCFFVTLFCIREKFQPVSKKEMLHMREVVTSLKNPKLVLSLFVTTLIIQVATGSIAPILTLYVRELAGNVSNVAFISGMIASVPGVAALLSAPRLGKLGDRIGPEKILITALIFSVLLLIPMSYVQTPLQLGILRFLLGAADGALLPAVQTLLVYNSSNQIAGRIFSYNQSFRDIGNVTGPLMGAAISANYGFRAVFLVTAGVVLFNAVYSWNSLRRRRIPQISN</sequence>
<name>MDTG_ECO27</name>
<proteinExistence type="inferred from homology"/>
<accession>B7UP67</accession>
<evidence type="ECO:0000255" key="1">
    <source>
        <dbReference type="HAMAP-Rule" id="MF_01528"/>
    </source>
</evidence>